<comment type="function">
    <text evidence="1">RNaseP catalyzes the removal of the 5'-leader sequence from pre-tRNA to produce the mature 5'-terminus. It can also cleave other RNA substrates such as 4.5S RNA. The protein component plays an auxiliary but essential role in vivo by binding to the 5'-leader sequence and broadening the substrate specificity of the ribozyme.</text>
</comment>
<comment type="catalytic activity">
    <reaction evidence="1">
        <text>Endonucleolytic cleavage of RNA, removing 5'-extranucleotides from tRNA precursor.</text>
        <dbReference type="EC" id="3.1.26.5"/>
    </reaction>
</comment>
<comment type="subunit">
    <text evidence="1">Consists of a catalytic RNA component (M1 or rnpB) and a protein subunit.</text>
</comment>
<comment type="similarity">
    <text evidence="1">Belongs to the RnpA family.</text>
</comment>
<reference key="1">
    <citation type="journal article" date="2006" name="Proc. Natl. Acad. Sci. U.S.A.">
        <title>Comparative genomics of the lactic acid bacteria.</title>
        <authorList>
            <person name="Makarova K.S."/>
            <person name="Slesarev A."/>
            <person name="Wolf Y.I."/>
            <person name="Sorokin A."/>
            <person name="Mirkin B."/>
            <person name="Koonin E.V."/>
            <person name="Pavlov A."/>
            <person name="Pavlova N."/>
            <person name="Karamychev V."/>
            <person name="Polouchine N."/>
            <person name="Shakhova V."/>
            <person name="Grigoriev I."/>
            <person name="Lou Y."/>
            <person name="Rohksar D."/>
            <person name="Lucas S."/>
            <person name="Huang K."/>
            <person name="Goodstein D.M."/>
            <person name="Hawkins T."/>
            <person name="Plengvidhya V."/>
            <person name="Welker D."/>
            <person name="Hughes J."/>
            <person name="Goh Y."/>
            <person name="Benson A."/>
            <person name="Baldwin K."/>
            <person name="Lee J.-H."/>
            <person name="Diaz-Muniz I."/>
            <person name="Dosti B."/>
            <person name="Smeianov V."/>
            <person name="Wechter W."/>
            <person name="Barabote R."/>
            <person name="Lorca G."/>
            <person name="Altermann E."/>
            <person name="Barrangou R."/>
            <person name="Ganesan B."/>
            <person name="Xie Y."/>
            <person name="Rawsthorne H."/>
            <person name="Tamir D."/>
            <person name="Parker C."/>
            <person name="Breidt F."/>
            <person name="Broadbent J.R."/>
            <person name="Hutkins R."/>
            <person name="O'Sullivan D."/>
            <person name="Steele J."/>
            <person name="Unlu G."/>
            <person name="Saier M.H. Jr."/>
            <person name="Klaenhammer T."/>
            <person name="Richardson P."/>
            <person name="Kozyavkin S."/>
            <person name="Weimer B.C."/>
            <person name="Mills D.A."/>
        </authorList>
    </citation>
    <scope>NUCLEOTIDE SEQUENCE [LARGE SCALE GENOMIC DNA]</scope>
    <source>
        <strain>ATCC 8293 / DSM 20343 / BCRC 11652 / CCM 1803 / JCM 6124 / NCDO 523 / NBRC 100496 / NCIMB 8023 / NCTC 12954 / NRRL B-1118 / 37Y</strain>
    </source>
</reference>
<dbReference type="EC" id="3.1.26.5" evidence="1"/>
<dbReference type="EMBL" id="CP000414">
    <property type="protein sequence ID" value="ABJ63133.1"/>
    <property type="molecule type" value="Genomic_DNA"/>
</dbReference>
<dbReference type="RefSeq" id="WP_010280488.1">
    <property type="nucleotide sequence ID" value="NC_008531.1"/>
</dbReference>
<dbReference type="SMR" id="Q03UI9"/>
<dbReference type="EnsemblBacteria" id="ABJ63133">
    <property type="protein sequence ID" value="ABJ63133"/>
    <property type="gene ID" value="LEUM_2064"/>
</dbReference>
<dbReference type="GeneID" id="29577113"/>
<dbReference type="KEGG" id="lme:LEUM_2064"/>
<dbReference type="eggNOG" id="COG0594">
    <property type="taxonomic scope" value="Bacteria"/>
</dbReference>
<dbReference type="HOGENOM" id="CLU_117179_9_1_9"/>
<dbReference type="Proteomes" id="UP000000362">
    <property type="component" value="Chromosome"/>
</dbReference>
<dbReference type="GO" id="GO:0030677">
    <property type="term" value="C:ribonuclease P complex"/>
    <property type="evidence" value="ECO:0007669"/>
    <property type="project" value="TreeGrafter"/>
</dbReference>
<dbReference type="GO" id="GO:0042781">
    <property type="term" value="F:3'-tRNA processing endoribonuclease activity"/>
    <property type="evidence" value="ECO:0007669"/>
    <property type="project" value="TreeGrafter"/>
</dbReference>
<dbReference type="GO" id="GO:0004526">
    <property type="term" value="F:ribonuclease P activity"/>
    <property type="evidence" value="ECO:0007669"/>
    <property type="project" value="UniProtKB-UniRule"/>
</dbReference>
<dbReference type="GO" id="GO:0000049">
    <property type="term" value="F:tRNA binding"/>
    <property type="evidence" value="ECO:0007669"/>
    <property type="project" value="UniProtKB-UniRule"/>
</dbReference>
<dbReference type="GO" id="GO:0001682">
    <property type="term" value="P:tRNA 5'-leader removal"/>
    <property type="evidence" value="ECO:0007669"/>
    <property type="project" value="UniProtKB-UniRule"/>
</dbReference>
<dbReference type="FunFam" id="3.30.230.10:FF:000021">
    <property type="entry name" value="Ribonuclease P protein component"/>
    <property type="match status" value="1"/>
</dbReference>
<dbReference type="Gene3D" id="3.30.230.10">
    <property type="match status" value="1"/>
</dbReference>
<dbReference type="HAMAP" id="MF_00227">
    <property type="entry name" value="RNase_P"/>
    <property type="match status" value="1"/>
</dbReference>
<dbReference type="InterPro" id="IPR020568">
    <property type="entry name" value="Ribosomal_Su5_D2-typ_SF"/>
</dbReference>
<dbReference type="InterPro" id="IPR014721">
    <property type="entry name" value="Ribsml_uS5_D2-typ_fold_subgr"/>
</dbReference>
<dbReference type="InterPro" id="IPR000100">
    <property type="entry name" value="RNase_P"/>
</dbReference>
<dbReference type="NCBIfam" id="TIGR00188">
    <property type="entry name" value="rnpA"/>
    <property type="match status" value="1"/>
</dbReference>
<dbReference type="PANTHER" id="PTHR33992">
    <property type="entry name" value="RIBONUCLEASE P PROTEIN COMPONENT"/>
    <property type="match status" value="1"/>
</dbReference>
<dbReference type="PANTHER" id="PTHR33992:SF1">
    <property type="entry name" value="RIBONUCLEASE P PROTEIN COMPONENT"/>
    <property type="match status" value="1"/>
</dbReference>
<dbReference type="Pfam" id="PF00825">
    <property type="entry name" value="Ribonuclease_P"/>
    <property type="match status" value="1"/>
</dbReference>
<dbReference type="SUPFAM" id="SSF54211">
    <property type="entry name" value="Ribosomal protein S5 domain 2-like"/>
    <property type="match status" value="1"/>
</dbReference>
<gene>
    <name evidence="1" type="primary">rnpA</name>
    <name type="ordered locus">LEUM_2064</name>
</gene>
<evidence type="ECO:0000255" key="1">
    <source>
        <dbReference type="HAMAP-Rule" id="MF_00227"/>
    </source>
</evidence>
<protein>
    <recommendedName>
        <fullName evidence="1">Ribonuclease P protein component</fullName>
        <shortName evidence="1">RNase P protein</shortName>
        <shortName evidence="1">RNaseP protein</shortName>
        <ecNumber evidence="1">3.1.26.5</ecNumber>
    </recommendedName>
    <alternativeName>
        <fullName evidence="1">Protein C5</fullName>
    </alternativeName>
</protein>
<organism>
    <name type="scientific">Leuconostoc mesenteroides subsp. mesenteroides (strain ATCC 8293 / DSM 20343 / BCRC 11652 / CCM 1803 / JCM 6124 / NCDO 523 / NBRC 100496 / NCIMB 8023 / NCTC 12954 / NRRL B-1118 / 37Y)</name>
    <dbReference type="NCBI Taxonomy" id="203120"/>
    <lineage>
        <taxon>Bacteria</taxon>
        <taxon>Bacillati</taxon>
        <taxon>Bacillota</taxon>
        <taxon>Bacilli</taxon>
        <taxon>Lactobacillales</taxon>
        <taxon>Lactobacillaceae</taxon>
        <taxon>Leuconostoc</taxon>
    </lineage>
</organism>
<sequence length="116" mass="13907">MRKTFRIKKPEEFQHVFNKHRSVANKYFIVYQMDKPEQKHFRVGLSVSKKVGKAHERVWVKRRIRQSLLELKPELPQELDLLVIARPAAAHRSQKFLKNQMIHVLKLAKILKEENE</sequence>
<accession>Q03UI9</accession>
<proteinExistence type="inferred from homology"/>
<feature type="chain" id="PRO_1000021424" description="Ribonuclease P protein component">
    <location>
        <begin position="1"/>
        <end position="116"/>
    </location>
</feature>
<keyword id="KW-0255">Endonuclease</keyword>
<keyword id="KW-0378">Hydrolase</keyword>
<keyword id="KW-0540">Nuclease</keyword>
<keyword id="KW-1185">Reference proteome</keyword>
<keyword id="KW-0694">RNA-binding</keyword>
<keyword id="KW-0819">tRNA processing</keyword>
<name>RNPA_LEUMM</name>